<keyword id="KW-0687">Ribonucleoprotein</keyword>
<keyword id="KW-0689">Ribosomal protein</keyword>
<keyword id="KW-0694">RNA-binding</keyword>
<keyword id="KW-0699">rRNA-binding</keyword>
<proteinExistence type="inferred from homology"/>
<dbReference type="EMBL" id="CU928163">
    <property type="protein sequence ID" value="CAR14928.1"/>
    <property type="molecule type" value="Genomic_DNA"/>
</dbReference>
<dbReference type="RefSeq" id="WP_001118930.1">
    <property type="nucleotide sequence ID" value="NC_011751.1"/>
</dbReference>
<dbReference type="RefSeq" id="YP_002414433.1">
    <property type="nucleotide sequence ID" value="NC_011751.1"/>
</dbReference>
<dbReference type="SMR" id="B7NDS8"/>
<dbReference type="STRING" id="585056.ECUMN_3780"/>
<dbReference type="GeneID" id="93778680"/>
<dbReference type="KEGG" id="eum:ECUMN_3780"/>
<dbReference type="PATRIC" id="fig|585056.7.peg.3955"/>
<dbReference type="HOGENOM" id="CLU_139869_0_1_6"/>
<dbReference type="Proteomes" id="UP000007097">
    <property type="component" value="Chromosome"/>
</dbReference>
<dbReference type="GO" id="GO:0005737">
    <property type="term" value="C:cytoplasm"/>
    <property type="evidence" value="ECO:0007669"/>
    <property type="project" value="UniProtKB-ARBA"/>
</dbReference>
<dbReference type="GO" id="GO:0015935">
    <property type="term" value="C:small ribosomal subunit"/>
    <property type="evidence" value="ECO:0007669"/>
    <property type="project" value="TreeGrafter"/>
</dbReference>
<dbReference type="GO" id="GO:0019843">
    <property type="term" value="F:rRNA binding"/>
    <property type="evidence" value="ECO:0007669"/>
    <property type="project" value="UniProtKB-UniRule"/>
</dbReference>
<dbReference type="GO" id="GO:0003735">
    <property type="term" value="F:structural constituent of ribosome"/>
    <property type="evidence" value="ECO:0007669"/>
    <property type="project" value="InterPro"/>
</dbReference>
<dbReference type="GO" id="GO:0006412">
    <property type="term" value="P:translation"/>
    <property type="evidence" value="ECO:0007669"/>
    <property type="project" value="UniProtKB-UniRule"/>
</dbReference>
<dbReference type="FunFam" id="1.10.287.1480:FF:000001">
    <property type="entry name" value="30S ribosomal protein S14"/>
    <property type="match status" value="1"/>
</dbReference>
<dbReference type="Gene3D" id="1.10.287.1480">
    <property type="match status" value="1"/>
</dbReference>
<dbReference type="HAMAP" id="MF_00537">
    <property type="entry name" value="Ribosomal_uS14_1"/>
    <property type="match status" value="1"/>
</dbReference>
<dbReference type="InterPro" id="IPR001209">
    <property type="entry name" value="Ribosomal_uS14"/>
</dbReference>
<dbReference type="InterPro" id="IPR023036">
    <property type="entry name" value="Ribosomal_uS14_bac/plastid"/>
</dbReference>
<dbReference type="InterPro" id="IPR018271">
    <property type="entry name" value="Ribosomal_uS14_CS"/>
</dbReference>
<dbReference type="NCBIfam" id="NF006477">
    <property type="entry name" value="PRK08881.1"/>
    <property type="match status" value="1"/>
</dbReference>
<dbReference type="PANTHER" id="PTHR19836">
    <property type="entry name" value="30S RIBOSOMAL PROTEIN S14"/>
    <property type="match status" value="1"/>
</dbReference>
<dbReference type="PANTHER" id="PTHR19836:SF19">
    <property type="entry name" value="SMALL RIBOSOMAL SUBUNIT PROTEIN US14M"/>
    <property type="match status" value="1"/>
</dbReference>
<dbReference type="Pfam" id="PF00253">
    <property type="entry name" value="Ribosomal_S14"/>
    <property type="match status" value="1"/>
</dbReference>
<dbReference type="SUPFAM" id="SSF57716">
    <property type="entry name" value="Glucocorticoid receptor-like (DNA-binding domain)"/>
    <property type="match status" value="1"/>
</dbReference>
<dbReference type="PROSITE" id="PS00527">
    <property type="entry name" value="RIBOSOMAL_S14"/>
    <property type="match status" value="1"/>
</dbReference>
<evidence type="ECO:0000255" key="1">
    <source>
        <dbReference type="HAMAP-Rule" id="MF_00537"/>
    </source>
</evidence>
<evidence type="ECO:0000305" key="2"/>
<feature type="chain" id="PRO_1000128391" description="Small ribosomal subunit protein uS14">
    <location>
        <begin position="1"/>
        <end position="101"/>
    </location>
</feature>
<reference key="1">
    <citation type="journal article" date="2009" name="PLoS Genet.">
        <title>Organised genome dynamics in the Escherichia coli species results in highly diverse adaptive paths.</title>
        <authorList>
            <person name="Touchon M."/>
            <person name="Hoede C."/>
            <person name="Tenaillon O."/>
            <person name="Barbe V."/>
            <person name="Baeriswyl S."/>
            <person name="Bidet P."/>
            <person name="Bingen E."/>
            <person name="Bonacorsi S."/>
            <person name="Bouchier C."/>
            <person name="Bouvet O."/>
            <person name="Calteau A."/>
            <person name="Chiapello H."/>
            <person name="Clermont O."/>
            <person name="Cruveiller S."/>
            <person name="Danchin A."/>
            <person name="Diard M."/>
            <person name="Dossat C."/>
            <person name="Karoui M.E."/>
            <person name="Frapy E."/>
            <person name="Garry L."/>
            <person name="Ghigo J.M."/>
            <person name="Gilles A.M."/>
            <person name="Johnson J."/>
            <person name="Le Bouguenec C."/>
            <person name="Lescat M."/>
            <person name="Mangenot S."/>
            <person name="Martinez-Jehanne V."/>
            <person name="Matic I."/>
            <person name="Nassif X."/>
            <person name="Oztas S."/>
            <person name="Petit M.A."/>
            <person name="Pichon C."/>
            <person name="Rouy Z."/>
            <person name="Ruf C.S."/>
            <person name="Schneider D."/>
            <person name="Tourret J."/>
            <person name="Vacherie B."/>
            <person name="Vallenet D."/>
            <person name="Medigue C."/>
            <person name="Rocha E.P.C."/>
            <person name="Denamur E."/>
        </authorList>
    </citation>
    <scope>NUCLEOTIDE SEQUENCE [LARGE SCALE GENOMIC DNA]</scope>
    <source>
        <strain>UMN026 / ExPEC</strain>
    </source>
</reference>
<comment type="function">
    <text evidence="1">Binds 16S rRNA, required for the assembly of 30S particles and may also be responsible for determining the conformation of the 16S rRNA at the A site.</text>
</comment>
<comment type="subunit">
    <text evidence="1">Part of the 30S ribosomal subunit. Contacts proteins S3 and S10.</text>
</comment>
<comment type="similarity">
    <text evidence="1">Belongs to the universal ribosomal protein uS14 family.</text>
</comment>
<accession>B7NDS8</accession>
<name>RS14_ECOLU</name>
<organism>
    <name type="scientific">Escherichia coli O17:K52:H18 (strain UMN026 / ExPEC)</name>
    <dbReference type="NCBI Taxonomy" id="585056"/>
    <lineage>
        <taxon>Bacteria</taxon>
        <taxon>Pseudomonadati</taxon>
        <taxon>Pseudomonadota</taxon>
        <taxon>Gammaproteobacteria</taxon>
        <taxon>Enterobacterales</taxon>
        <taxon>Enterobacteriaceae</taxon>
        <taxon>Escherichia</taxon>
    </lineage>
</organism>
<gene>
    <name evidence="1" type="primary">rpsN</name>
    <name type="ordered locus">ECUMN_3780</name>
</gene>
<sequence>MAKQSMKAREVKRVALADKYFAKRAELKAIISDVNASDEDRWNAVLKLQTLPRDSSPSRQRNRCRQTGRPHGFLRKFGLSRIKVREAAMRGEIPGLKKASW</sequence>
<protein>
    <recommendedName>
        <fullName evidence="1">Small ribosomal subunit protein uS14</fullName>
    </recommendedName>
    <alternativeName>
        <fullName evidence="2">30S ribosomal protein S14</fullName>
    </alternativeName>
</protein>